<accession>A8GDZ4</accession>
<evidence type="ECO:0000255" key="1">
    <source>
        <dbReference type="HAMAP-Rule" id="MF_01878"/>
    </source>
</evidence>
<sequence>MSTANNNSEHPESVSLNAFKQPKAFYLIFSIELWERFGYYGLQGIMAVYLVKMLGLSEADSITLFSSFSALVYGFVAIGGWLGDKVLGSKRVIVLGALVLAVGYAMVAYSGHEIFWVYLGMATIAVGSGLFKANPSSLLSTCYEKDDPRLDGAFTMYYMSVNIGSFLSMLATPWLAAKYGWSVAFSLSVVGMLITLVNFMVCHKWVKQHGSKPDFKPLQVKKLLMVLVGVVALVALSSWLLHNQIIARWALAIVSIGIVIVFAKETFALHGAARRKMIVAFLLMLEAVVFFVLYSQMPTSLNFFAIHNVEHNILGLAFEPEQYQALNPFWIMLASPILAALYNKMGDRLPMPHKFAFGMILCSGAFLVLPWGASFANEQGIVSVNWLILSYALQSIGELMISGLGLAMVAQLVPQRLMGFIMGSWFLTTAAAALIAGKVAGLTAVPGDVNDAHASLAIYSHVFMQIGIATAVIAILMMLTAPKLHRMTLDTAEDTEKKAQAAAITN</sequence>
<feature type="chain" id="PRO_0000395181" description="Dipeptide and tripeptide permease A">
    <location>
        <begin position="1"/>
        <end position="506"/>
    </location>
</feature>
<feature type="topological domain" description="Cytoplasmic" evidence="1">
    <location>
        <begin position="1"/>
        <end position="36"/>
    </location>
</feature>
<feature type="transmembrane region" description="Helical" evidence="1">
    <location>
        <begin position="37"/>
        <end position="57"/>
    </location>
</feature>
<feature type="topological domain" description="Periplasmic" evidence="1">
    <location>
        <begin position="58"/>
        <end position="61"/>
    </location>
</feature>
<feature type="transmembrane region" description="Helical" evidence="1">
    <location>
        <begin position="62"/>
        <end position="82"/>
    </location>
</feature>
<feature type="topological domain" description="Cytoplasmic" evidence="1">
    <location>
        <begin position="83"/>
        <end position="91"/>
    </location>
</feature>
<feature type="transmembrane region" description="Helical" evidence="1">
    <location>
        <begin position="92"/>
        <end position="112"/>
    </location>
</feature>
<feature type="transmembrane region" description="Helical" evidence="1">
    <location>
        <begin position="113"/>
        <end position="133"/>
    </location>
</feature>
<feature type="topological domain" description="Cytoplasmic" evidence="1">
    <location>
        <begin position="134"/>
        <end position="155"/>
    </location>
</feature>
<feature type="transmembrane region" description="Helical" evidence="1">
    <location>
        <begin position="156"/>
        <end position="176"/>
    </location>
</feature>
<feature type="topological domain" description="Periplasmic" evidence="1">
    <location>
        <begin position="177"/>
        <end position="180"/>
    </location>
</feature>
<feature type="transmembrane region" description="Helical" evidence="1">
    <location>
        <begin position="181"/>
        <end position="201"/>
    </location>
</feature>
<feature type="topological domain" description="Cytoplasmic" evidence="1">
    <location>
        <begin position="202"/>
        <end position="222"/>
    </location>
</feature>
<feature type="transmembrane region" description="Helical" evidence="1">
    <location>
        <begin position="223"/>
        <end position="243"/>
    </location>
</feature>
<feature type="topological domain" description="Periplasmic" evidence="1">
    <location>
        <begin position="244"/>
        <end position="248"/>
    </location>
</feature>
<feature type="transmembrane region" description="Helical" evidence="1">
    <location>
        <begin position="249"/>
        <end position="269"/>
    </location>
</feature>
<feature type="topological domain" description="Cytoplasmic" evidence="1">
    <location>
        <begin position="270"/>
        <end position="276"/>
    </location>
</feature>
<feature type="transmembrane region" description="Helical" evidence="1">
    <location>
        <begin position="277"/>
        <end position="297"/>
    </location>
</feature>
<feature type="topological domain" description="Periplasmic" evidence="1">
    <location>
        <begin position="298"/>
        <end position="322"/>
    </location>
</feature>
<feature type="transmembrane region" description="Helical" evidence="1">
    <location>
        <begin position="323"/>
        <end position="343"/>
    </location>
</feature>
<feature type="topological domain" description="Cytoplasmic" evidence="1">
    <location>
        <begin position="344"/>
        <end position="354"/>
    </location>
</feature>
<feature type="transmembrane region" description="Helical" evidence="1">
    <location>
        <begin position="355"/>
        <end position="375"/>
    </location>
</feature>
<feature type="topological domain" description="Periplasmic" evidence="1">
    <location>
        <begin position="376"/>
        <end position="385"/>
    </location>
</feature>
<feature type="transmembrane region" description="Helical" evidence="1">
    <location>
        <begin position="386"/>
        <end position="406"/>
    </location>
</feature>
<feature type="topological domain" description="Cytoplasmic" evidence="1">
    <location>
        <begin position="407"/>
        <end position="416"/>
    </location>
</feature>
<feature type="transmembrane region" description="Helical" evidence="1">
    <location>
        <begin position="417"/>
        <end position="437"/>
    </location>
</feature>
<feature type="topological domain" description="Periplasmic" evidence="1">
    <location>
        <begin position="438"/>
        <end position="461"/>
    </location>
</feature>
<feature type="transmembrane region" description="Helical" evidence="1">
    <location>
        <begin position="462"/>
        <end position="482"/>
    </location>
</feature>
<feature type="topological domain" description="Cytoplasmic" evidence="1">
    <location>
        <begin position="483"/>
        <end position="506"/>
    </location>
</feature>
<protein>
    <recommendedName>
        <fullName evidence="1">Dipeptide and tripeptide permease A</fullName>
    </recommendedName>
</protein>
<gene>
    <name evidence="1" type="primary">dtpA</name>
    <name type="ordered locus">Spro_2233</name>
</gene>
<keyword id="KW-0997">Cell inner membrane</keyword>
<keyword id="KW-1003">Cell membrane</keyword>
<keyword id="KW-0472">Membrane</keyword>
<keyword id="KW-0571">Peptide transport</keyword>
<keyword id="KW-0653">Protein transport</keyword>
<keyword id="KW-0812">Transmembrane</keyword>
<keyword id="KW-1133">Transmembrane helix</keyword>
<keyword id="KW-0813">Transport</keyword>
<comment type="function">
    <text evidence="1">Proton-dependent permease that transports di- and tripeptides.</text>
</comment>
<comment type="subcellular location">
    <subcellularLocation>
        <location evidence="1">Cell inner membrane</location>
        <topology evidence="1">Multi-pass membrane protein</topology>
    </subcellularLocation>
</comment>
<comment type="similarity">
    <text evidence="1">Belongs to the major facilitator superfamily. Proton-dependent oligopeptide transporter (POT/PTR) (TC 2.A.17) family. DtpA subfamily.</text>
</comment>
<reference key="1">
    <citation type="submission" date="2007-09" db="EMBL/GenBank/DDBJ databases">
        <title>Complete sequence of chromosome of Serratia proteamaculans 568.</title>
        <authorList>
            <consortium name="US DOE Joint Genome Institute"/>
            <person name="Copeland A."/>
            <person name="Lucas S."/>
            <person name="Lapidus A."/>
            <person name="Barry K."/>
            <person name="Glavina del Rio T."/>
            <person name="Dalin E."/>
            <person name="Tice H."/>
            <person name="Pitluck S."/>
            <person name="Chain P."/>
            <person name="Malfatti S."/>
            <person name="Shin M."/>
            <person name="Vergez L."/>
            <person name="Schmutz J."/>
            <person name="Larimer F."/>
            <person name="Land M."/>
            <person name="Hauser L."/>
            <person name="Kyrpides N."/>
            <person name="Kim E."/>
            <person name="Taghavi S."/>
            <person name="Newman L."/>
            <person name="Vangronsveld J."/>
            <person name="van der Lelie D."/>
            <person name="Richardson P."/>
        </authorList>
    </citation>
    <scope>NUCLEOTIDE SEQUENCE [LARGE SCALE GENOMIC DNA]</scope>
    <source>
        <strain>568</strain>
    </source>
</reference>
<organism>
    <name type="scientific">Serratia proteamaculans (strain 568)</name>
    <dbReference type="NCBI Taxonomy" id="399741"/>
    <lineage>
        <taxon>Bacteria</taxon>
        <taxon>Pseudomonadati</taxon>
        <taxon>Pseudomonadota</taxon>
        <taxon>Gammaproteobacteria</taxon>
        <taxon>Enterobacterales</taxon>
        <taxon>Yersiniaceae</taxon>
        <taxon>Serratia</taxon>
    </lineage>
</organism>
<name>DTPA_SERP5</name>
<proteinExistence type="inferred from homology"/>
<dbReference type="EMBL" id="CP000826">
    <property type="protein sequence ID" value="ABV41334.1"/>
    <property type="molecule type" value="Genomic_DNA"/>
</dbReference>
<dbReference type="SMR" id="A8GDZ4"/>
<dbReference type="STRING" id="399741.Spro_2233"/>
<dbReference type="KEGG" id="spe:Spro_2233"/>
<dbReference type="eggNOG" id="COG3104">
    <property type="taxonomic scope" value="Bacteria"/>
</dbReference>
<dbReference type="HOGENOM" id="CLU_004790_0_0_6"/>
<dbReference type="OrthoDB" id="9772725at2"/>
<dbReference type="GO" id="GO:0005886">
    <property type="term" value="C:plasma membrane"/>
    <property type="evidence" value="ECO:0007669"/>
    <property type="project" value="UniProtKB-SubCell"/>
</dbReference>
<dbReference type="GO" id="GO:0071916">
    <property type="term" value="F:dipeptide transmembrane transporter activity"/>
    <property type="evidence" value="ECO:0007669"/>
    <property type="project" value="UniProtKB-UniRule"/>
</dbReference>
<dbReference type="GO" id="GO:0015333">
    <property type="term" value="F:peptide:proton symporter activity"/>
    <property type="evidence" value="ECO:0007669"/>
    <property type="project" value="UniProtKB-UniRule"/>
</dbReference>
<dbReference type="GO" id="GO:0042937">
    <property type="term" value="F:tripeptide transmembrane transporter activity"/>
    <property type="evidence" value="ECO:0007669"/>
    <property type="project" value="UniProtKB-UniRule"/>
</dbReference>
<dbReference type="GO" id="GO:0015031">
    <property type="term" value="P:protein transport"/>
    <property type="evidence" value="ECO:0007669"/>
    <property type="project" value="UniProtKB-KW"/>
</dbReference>
<dbReference type="CDD" id="cd17346">
    <property type="entry name" value="MFS_DtpA_like"/>
    <property type="match status" value="1"/>
</dbReference>
<dbReference type="FunFam" id="1.20.1250.20:FF:000017">
    <property type="entry name" value="Dipeptide and tripeptide permease A"/>
    <property type="match status" value="1"/>
</dbReference>
<dbReference type="Gene3D" id="1.20.1250.20">
    <property type="entry name" value="MFS general substrate transporter like domains"/>
    <property type="match status" value="1"/>
</dbReference>
<dbReference type="HAMAP" id="MF_01878">
    <property type="entry name" value="PTR2_DtpA_subfam"/>
    <property type="match status" value="1"/>
</dbReference>
<dbReference type="InterPro" id="IPR023517">
    <property type="entry name" value="AA/pep_transptr_DtpA"/>
</dbReference>
<dbReference type="InterPro" id="IPR005279">
    <property type="entry name" value="Dipep/tripep_permease"/>
</dbReference>
<dbReference type="InterPro" id="IPR020846">
    <property type="entry name" value="MFS_dom"/>
</dbReference>
<dbReference type="InterPro" id="IPR036259">
    <property type="entry name" value="MFS_trans_sf"/>
</dbReference>
<dbReference type="InterPro" id="IPR050171">
    <property type="entry name" value="MFS_Transporters"/>
</dbReference>
<dbReference type="InterPro" id="IPR000109">
    <property type="entry name" value="POT_fam"/>
</dbReference>
<dbReference type="InterPro" id="IPR018456">
    <property type="entry name" value="PTR2_symporter_CS"/>
</dbReference>
<dbReference type="NCBIfam" id="NF007137">
    <property type="entry name" value="PRK09584.1"/>
    <property type="match status" value="1"/>
</dbReference>
<dbReference type="NCBIfam" id="TIGR00924">
    <property type="entry name" value="yjdL_sub1_fam"/>
    <property type="match status" value="1"/>
</dbReference>
<dbReference type="PANTHER" id="PTHR23517:SF15">
    <property type="entry name" value="PROTON-DEPENDENT OLIGOPEPTIDE FAMILY TRANSPORT PROTEIN"/>
    <property type="match status" value="1"/>
</dbReference>
<dbReference type="PANTHER" id="PTHR23517">
    <property type="entry name" value="RESISTANCE PROTEIN MDTM, PUTATIVE-RELATED-RELATED"/>
    <property type="match status" value="1"/>
</dbReference>
<dbReference type="Pfam" id="PF00854">
    <property type="entry name" value="PTR2"/>
    <property type="match status" value="1"/>
</dbReference>
<dbReference type="SUPFAM" id="SSF103473">
    <property type="entry name" value="MFS general substrate transporter"/>
    <property type="match status" value="1"/>
</dbReference>
<dbReference type="PROSITE" id="PS50850">
    <property type="entry name" value="MFS"/>
    <property type="match status" value="1"/>
</dbReference>
<dbReference type="PROSITE" id="PS01022">
    <property type="entry name" value="PTR2_1"/>
    <property type="match status" value="1"/>
</dbReference>
<dbReference type="PROSITE" id="PS01023">
    <property type="entry name" value="PTR2_2"/>
    <property type="match status" value="1"/>
</dbReference>